<organism>
    <name type="scientific">Gracilaria tenuistipitata var. liui</name>
    <name type="common">Red alga</name>
    <dbReference type="NCBI Taxonomy" id="285951"/>
    <lineage>
        <taxon>Eukaryota</taxon>
        <taxon>Rhodophyta</taxon>
        <taxon>Florideophyceae</taxon>
        <taxon>Rhodymeniophycidae</taxon>
        <taxon>Gracilariales</taxon>
        <taxon>Gracilariaceae</taxon>
        <taxon>Gracilaria</taxon>
        <taxon>Gracilaria tenuistipitata</taxon>
    </lineage>
</organism>
<evidence type="ECO:0000250" key="1"/>
<evidence type="ECO:0000305" key="2"/>
<keyword id="KW-0150">Chloroplast</keyword>
<keyword id="KW-0934">Plastid</keyword>
<keyword id="KW-0687">Ribonucleoprotein</keyword>
<keyword id="KW-0689">Ribosomal protein</keyword>
<keyword id="KW-0694">RNA-binding</keyword>
<keyword id="KW-0699">rRNA-binding</keyword>
<sequence length="179" mass="20579">MENTLKTLYNNKICKDLQKKFRYKNIHQIPKLVKITINRGLGEAANNKQVLEKSMNEIAAITGQKPKITKSKKAIAGFKIRENIAIGLVVTLRRDKMYDFLNKLINLALPRIRDFRGISYKTFDGRGNYNLGLKEQIIFPEIKYDNVDKIRGLDITIVTTAKNDEEGLTLLKEFGMPFM</sequence>
<gene>
    <name type="primary">rpl5</name>
    <name type="ordered locus">Grc000089</name>
</gene>
<dbReference type="EMBL" id="AY673996">
    <property type="protein sequence ID" value="AAT79670.1"/>
    <property type="molecule type" value="Genomic_DNA"/>
</dbReference>
<dbReference type="RefSeq" id="YP_063595.1">
    <property type="nucleotide sequence ID" value="NC_006137.1"/>
</dbReference>
<dbReference type="SMR" id="Q6B8W5"/>
<dbReference type="GeneID" id="2944048"/>
<dbReference type="GO" id="GO:0009507">
    <property type="term" value="C:chloroplast"/>
    <property type="evidence" value="ECO:0007669"/>
    <property type="project" value="UniProtKB-SubCell"/>
</dbReference>
<dbReference type="GO" id="GO:1990904">
    <property type="term" value="C:ribonucleoprotein complex"/>
    <property type="evidence" value="ECO:0007669"/>
    <property type="project" value="UniProtKB-KW"/>
</dbReference>
<dbReference type="GO" id="GO:0005840">
    <property type="term" value="C:ribosome"/>
    <property type="evidence" value="ECO:0007669"/>
    <property type="project" value="UniProtKB-KW"/>
</dbReference>
<dbReference type="GO" id="GO:0019843">
    <property type="term" value="F:rRNA binding"/>
    <property type="evidence" value="ECO:0007669"/>
    <property type="project" value="UniProtKB-UniRule"/>
</dbReference>
<dbReference type="GO" id="GO:0003735">
    <property type="term" value="F:structural constituent of ribosome"/>
    <property type="evidence" value="ECO:0007669"/>
    <property type="project" value="InterPro"/>
</dbReference>
<dbReference type="GO" id="GO:0006412">
    <property type="term" value="P:translation"/>
    <property type="evidence" value="ECO:0007669"/>
    <property type="project" value="UniProtKB-UniRule"/>
</dbReference>
<dbReference type="FunFam" id="3.30.1440.10:FF:000001">
    <property type="entry name" value="50S ribosomal protein L5"/>
    <property type="match status" value="1"/>
</dbReference>
<dbReference type="Gene3D" id="3.30.1440.10">
    <property type="match status" value="1"/>
</dbReference>
<dbReference type="HAMAP" id="MF_01333_B">
    <property type="entry name" value="Ribosomal_uL5_B"/>
    <property type="match status" value="1"/>
</dbReference>
<dbReference type="InterPro" id="IPR002132">
    <property type="entry name" value="Ribosomal_uL5"/>
</dbReference>
<dbReference type="InterPro" id="IPR020930">
    <property type="entry name" value="Ribosomal_uL5_bac-type"/>
</dbReference>
<dbReference type="InterPro" id="IPR031309">
    <property type="entry name" value="Ribosomal_uL5_C"/>
</dbReference>
<dbReference type="InterPro" id="IPR022803">
    <property type="entry name" value="Ribosomal_uL5_dom_sf"/>
</dbReference>
<dbReference type="InterPro" id="IPR031310">
    <property type="entry name" value="Ribosomal_uL5_N"/>
</dbReference>
<dbReference type="NCBIfam" id="NF000585">
    <property type="entry name" value="PRK00010.1"/>
    <property type="match status" value="1"/>
</dbReference>
<dbReference type="PANTHER" id="PTHR11994">
    <property type="entry name" value="60S RIBOSOMAL PROTEIN L11-RELATED"/>
    <property type="match status" value="1"/>
</dbReference>
<dbReference type="Pfam" id="PF00281">
    <property type="entry name" value="Ribosomal_L5"/>
    <property type="match status" value="1"/>
</dbReference>
<dbReference type="Pfam" id="PF00673">
    <property type="entry name" value="Ribosomal_L5_C"/>
    <property type="match status" value="1"/>
</dbReference>
<dbReference type="PIRSF" id="PIRSF002161">
    <property type="entry name" value="Ribosomal_L5"/>
    <property type="match status" value="1"/>
</dbReference>
<dbReference type="SUPFAM" id="SSF55282">
    <property type="entry name" value="RL5-like"/>
    <property type="match status" value="1"/>
</dbReference>
<proteinExistence type="inferred from homology"/>
<accession>Q6B8W5</accession>
<feature type="chain" id="PRO_0000125042" description="Large ribosomal subunit protein uL5c">
    <location>
        <begin position="1"/>
        <end position="179"/>
    </location>
</feature>
<name>RK5_GRATL</name>
<reference key="1">
    <citation type="journal article" date="2004" name="J. Mol. Evol.">
        <title>Comparative analysis of the complete plastid genome sequence of the red alga Gracilaria tenuistipitata var. liui provides insights into the evolution of rhodoplasts and their relationship to other plastids.</title>
        <authorList>
            <person name="Hagopian J.C."/>
            <person name="Reis M."/>
            <person name="Kitajima J.P."/>
            <person name="Bhattacharya D."/>
            <person name="de Oliveira M.C."/>
        </authorList>
    </citation>
    <scope>NUCLEOTIDE SEQUENCE [LARGE SCALE GENOMIC DNA]</scope>
</reference>
<geneLocation type="chloroplast"/>
<comment type="function">
    <text evidence="1">Binds 5S rRNA, forms part of the central protuberance of the 50S subunit.</text>
</comment>
<comment type="subunit">
    <text evidence="1">Part of the 50S ribosomal subunit; contacts the 5S rRNA.</text>
</comment>
<comment type="subcellular location">
    <subcellularLocation>
        <location>Plastid</location>
        <location>Chloroplast</location>
    </subcellularLocation>
</comment>
<comment type="similarity">
    <text evidence="2">Belongs to the universal ribosomal protein uL5 family.</text>
</comment>
<protein>
    <recommendedName>
        <fullName evidence="2">Large ribosomal subunit protein uL5c</fullName>
    </recommendedName>
    <alternativeName>
        <fullName>50S ribosomal protein L5, chloroplastic</fullName>
    </alternativeName>
</protein>